<dbReference type="EC" id="1.13.11.-"/>
<dbReference type="EMBL" id="J04996">
    <property type="protein sequence ID" value="AAA26010.1"/>
    <property type="molecule type" value="Genomic_DNA"/>
</dbReference>
<dbReference type="EMBL" id="CP000712">
    <property type="protein sequence ID" value="ABQ79007.1"/>
    <property type="molecule type" value="Genomic_DNA"/>
</dbReference>
<dbReference type="PIR" id="F36516">
    <property type="entry name" value="F36516"/>
</dbReference>
<dbReference type="SMR" id="P13453"/>
<dbReference type="KEGG" id="ppf:Pput_2876"/>
<dbReference type="eggNOG" id="COG0346">
    <property type="taxonomic scope" value="Bacteria"/>
</dbReference>
<dbReference type="HOGENOM" id="CLU_052361_2_0_6"/>
<dbReference type="BioCyc" id="MetaCyc:MONOMER-11354"/>
<dbReference type="UniPathway" id="UPA00273"/>
<dbReference type="GO" id="GO:0051213">
    <property type="term" value="F:dioxygenase activity"/>
    <property type="evidence" value="ECO:0007669"/>
    <property type="project" value="UniProtKB-KW"/>
</dbReference>
<dbReference type="GO" id="GO:0008198">
    <property type="term" value="F:ferrous iron binding"/>
    <property type="evidence" value="ECO:0007669"/>
    <property type="project" value="InterPro"/>
</dbReference>
<dbReference type="GO" id="GO:0042203">
    <property type="term" value="P:toluene catabolic process"/>
    <property type="evidence" value="ECO:0007669"/>
    <property type="project" value="UniProtKB-UniPathway"/>
</dbReference>
<dbReference type="CDD" id="cd07237">
    <property type="entry name" value="BphC1-RGP6_C_like"/>
    <property type="match status" value="1"/>
</dbReference>
<dbReference type="CDD" id="cd07252">
    <property type="entry name" value="BphC1-RGP6_N_like"/>
    <property type="match status" value="1"/>
</dbReference>
<dbReference type="Gene3D" id="3.10.180.10">
    <property type="entry name" value="2,3-Dihydroxybiphenyl 1,2-Dioxygenase, domain 1"/>
    <property type="match status" value="2"/>
</dbReference>
<dbReference type="InterPro" id="IPR017626">
    <property type="entry name" value="DiOHbiphenyl_dOase"/>
</dbReference>
<dbReference type="InterPro" id="IPR029068">
    <property type="entry name" value="Glyas_Bleomycin-R_OHBP_Dase"/>
</dbReference>
<dbReference type="InterPro" id="IPR004360">
    <property type="entry name" value="Glyas_Fos-R_dOase_dom"/>
</dbReference>
<dbReference type="InterPro" id="IPR037523">
    <property type="entry name" value="VOC"/>
</dbReference>
<dbReference type="InterPro" id="IPR000486">
    <property type="entry name" value="Xdiol_ring_cleave_dOase_1/2"/>
</dbReference>
<dbReference type="NCBIfam" id="TIGR03213">
    <property type="entry name" value="23dbph12diox"/>
    <property type="match status" value="1"/>
</dbReference>
<dbReference type="Pfam" id="PF22632">
    <property type="entry name" value="BphC_D1"/>
    <property type="match status" value="1"/>
</dbReference>
<dbReference type="Pfam" id="PF00903">
    <property type="entry name" value="Glyoxalase"/>
    <property type="match status" value="1"/>
</dbReference>
<dbReference type="SUPFAM" id="SSF54593">
    <property type="entry name" value="Glyoxalase/Bleomycin resistance protein/Dihydroxybiphenyl dioxygenase"/>
    <property type="match status" value="2"/>
</dbReference>
<dbReference type="PROSITE" id="PS00082">
    <property type="entry name" value="EXTRADIOL_DIOXYGENAS"/>
    <property type="match status" value="1"/>
</dbReference>
<dbReference type="PROSITE" id="PS51819">
    <property type="entry name" value="VOC"/>
    <property type="match status" value="2"/>
</dbReference>
<gene>
    <name type="primary">todE</name>
    <name type="ordered locus">Pput_2876</name>
</gene>
<organism>
    <name type="scientific">Pseudomonas putida (strain ATCC 700007 / DSM 6899 / JCM 31910 / BCRC 17059 / LMG 24140 / F1)</name>
    <dbReference type="NCBI Taxonomy" id="351746"/>
    <lineage>
        <taxon>Bacteria</taxon>
        <taxon>Pseudomonadati</taxon>
        <taxon>Pseudomonadota</taxon>
        <taxon>Gammaproteobacteria</taxon>
        <taxon>Pseudomonadales</taxon>
        <taxon>Pseudomonadaceae</taxon>
        <taxon>Pseudomonas</taxon>
    </lineage>
</organism>
<protein>
    <recommendedName>
        <fullName>3-methylcatechol 2,3-dioxygenase</fullName>
        <ecNumber>1.13.11.-</ecNumber>
    </recommendedName>
</protein>
<name>TODE_PSEP1</name>
<accession>P13453</accession>
<accession>A5W4E7</accession>
<reference key="1">
    <citation type="journal article" date="1989" name="J. Biol. Chem.">
        <title>Toluene degradation by Pseudomonas putida F1. Nucleotide sequence of the todC1C2BADE genes and their expression in Escherichia coli.</title>
        <authorList>
            <person name="Zylstra G.J."/>
            <person name="Gibson D.T."/>
        </authorList>
    </citation>
    <scope>NUCLEOTIDE SEQUENCE [GENOMIC DNA]</scope>
    <scope>PROTEIN SEQUENCE OF 2-13</scope>
</reference>
<reference key="2">
    <citation type="submission" date="2007-05" db="EMBL/GenBank/DDBJ databases">
        <title>Complete sequence of Pseudomonas putida F1.</title>
        <authorList>
            <consortium name="US DOE Joint Genome Institute"/>
            <person name="Copeland A."/>
            <person name="Lucas S."/>
            <person name="Lapidus A."/>
            <person name="Barry K."/>
            <person name="Detter J.C."/>
            <person name="Glavina del Rio T."/>
            <person name="Hammon N."/>
            <person name="Israni S."/>
            <person name="Dalin E."/>
            <person name="Tice H."/>
            <person name="Pitluck S."/>
            <person name="Chain P."/>
            <person name="Malfatti S."/>
            <person name="Shin M."/>
            <person name="Vergez L."/>
            <person name="Schmutz J."/>
            <person name="Larimer F."/>
            <person name="Land M."/>
            <person name="Hauser L."/>
            <person name="Kyrpides N."/>
            <person name="Lykidis A."/>
            <person name="Parales R."/>
            <person name="Richardson P."/>
        </authorList>
    </citation>
    <scope>NUCLEOTIDE SEQUENCE [LARGE SCALE GENOMIC DNA]</scope>
    <source>
        <strain>ATCC 700007 / DSM 6899 / JCM 31910 / BCRC 17059 / LMG 24140 / F1</strain>
    </source>
</reference>
<proteinExistence type="evidence at protein level"/>
<feature type="initiator methionine" description="Removed" evidence="3">
    <location>
        <position position="1"/>
    </location>
</feature>
<feature type="chain" id="PRO_0000085032" description="3-methylcatechol 2,3-dioxygenase">
    <location>
        <begin position="2"/>
        <end position="291"/>
    </location>
</feature>
<feature type="domain" description="VOC 1" evidence="2">
    <location>
        <begin position="5"/>
        <end position="119"/>
    </location>
</feature>
<feature type="domain" description="VOC 2" evidence="2">
    <location>
        <begin position="143"/>
        <end position="264"/>
    </location>
</feature>
<feature type="binding site" evidence="1">
    <location>
        <position position="146"/>
    </location>
    <ligand>
        <name>Fe cation</name>
        <dbReference type="ChEBI" id="CHEBI:24875"/>
    </ligand>
</feature>
<feature type="binding site" evidence="1">
    <location>
        <position position="210"/>
    </location>
    <ligand>
        <name>Fe cation</name>
        <dbReference type="ChEBI" id="CHEBI:24875"/>
    </ligand>
</feature>
<feature type="binding site" evidence="1">
    <location>
        <position position="260"/>
    </location>
    <ligand>
        <name>Fe cation</name>
        <dbReference type="ChEBI" id="CHEBI:24875"/>
    </ligand>
</feature>
<evidence type="ECO:0000250" key="1"/>
<evidence type="ECO:0000255" key="2">
    <source>
        <dbReference type="PROSITE-ProRule" id="PRU01163"/>
    </source>
</evidence>
<evidence type="ECO:0000269" key="3">
    <source>
    </source>
</evidence>
<evidence type="ECO:0000305" key="4"/>
<keyword id="KW-0058">Aromatic hydrocarbons catabolism</keyword>
<keyword id="KW-0223">Dioxygenase</keyword>
<keyword id="KW-0903">Direct protein sequencing</keyword>
<keyword id="KW-0408">Iron</keyword>
<keyword id="KW-0479">Metal-binding</keyword>
<keyword id="KW-0560">Oxidoreductase</keyword>
<keyword id="KW-0677">Repeat</keyword>
<comment type="catalytic activity">
    <reaction>
        <text>3-methylcatechol + O2 = 2-hydroxy-6-oxo-2,4-heptadienoate + H(+)</text>
        <dbReference type="Rhea" id="RHEA:48996"/>
        <dbReference type="ChEBI" id="CHEBI:15378"/>
        <dbReference type="ChEBI" id="CHEBI:15379"/>
        <dbReference type="ChEBI" id="CHEBI:18404"/>
        <dbReference type="ChEBI" id="CHEBI:90887"/>
    </reaction>
</comment>
<comment type="cofactor">
    <cofactor>
        <name>Fe(2+)</name>
        <dbReference type="ChEBI" id="CHEBI:29033"/>
    </cofactor>
</comment>
<comment type="pathway">
    <text>Xenobiotic degradation; toluene degradation.</text>
</comment>
<comment type="subunit">
    <text>Homooctamer.</text>
</comment>
<comment type="similarity">
    <text evidence="4">Belongs to the extradiol ring-cleavage dioxygenase family.</text>
</comment>
<sequence>MSIQRLGYLGFEVADVRSWRTFATTRLGMMEASASETEATFRIDSRAWRLSVSRGPADDYLFAGFEVDSEQGLQEVKESLQAHGVTVKVEGGELIAKRGVLGLISCTDPFGNRVEIYYGATELFERPFASPTGVSGFQTGDQGLGHYVLSVADVDAALAFYTKALGFQLADVIDWTIGDGLSVTLYFLYCNGRHHSFAFAKLPGSKRLHHFMLQANGMDDVGLAYDKFDAERAVVMSLGRHTNDHMISFYGATPSGFAVEYGWGAREVTRHWSVVRYDRISIWGHKFQAPA</sequence>